<accession>Q7W2K4</accession>
<gene>
    <name evidence="1" type="primary">rpmH</name>
    <name type="ordered locus">BPP4402</name>
</gene>
<dbReference type="EMBL" id="BX640436">
    <property type="protein sequence ID" value="CAE39681.1"/>
    <property type="molecule type" value="Genomic_DNA"/>
</dbReference>
<dbReference type="RefSeq" id="WP_003816025.1">
    <property type="nucleotide sequence ID" value="NC_002928.3"/>
</dbReference>
<dbReference type="SMR" id="Q7W2K4"/>
<dbReference type="GeneID" id="94355904"/>
<dbReference type="KEGG" id="bpa:BPP4402"/>
<dbReference type="HOGENOM" id="CLU_129938_2_0_4"/>
<dbReference type="Proteomes" id="UP000001421">
    <property type="component" value="Chromosome"/>
</dbReference>
<dbReference type="GO" id="GO:1990904">
    <property type="term" value="C:ribonucleoprotein complex"/>
    <property type="evidence" value="ECO:0007669"/>
    <property type="project" value="UniProtKB-KW"/>
</dbReference>
<dbReference type="GO" id="GO:0005840">
    <property type="term" value="C:ribosome"/>
    <property type="evidence" value="ECO:0007669"/>
    <property type="project" value="UniProtKB-KW"/>
</dbReference>
<dbReference type="GO" id="GO:0003735">
    <property type="term" value="F:structural constituent of ribosome"/>
    <property type="evidence" value="ECO:0007669"/>
    <property type="project" value="InterPro"/>
</dbReference>
<dbReference type="GO" id="GO:0006412">
    <property type="term" value="P:translation"/>
    <property type="evidence" value="ECO:0007669"/>
    <property type="project" value="UniProtKB-UniRule"/>
</dbReference>
<dbReference type="FunFam" id="1.10.287.3980:FF:000001">
    <property type="entry name" value="Mitochondrial ribosomal protein L34"/>
    <property type="match status" value="1"/>
</dbReference>
<dbReference type="Gene3D" id="1.10.287.3980">
    <property type="match status" value="1"/>
</dbReference>
<dbReference type="HAMAP" id="MF_00391">
    <property type="entry name" value="Ribosomal_bL34"/>
    <property type="match status" value="1"/>
</dbReference>
<dbReference type="InterPro" id="IPR000271">
    <property type="entry name" value="Ribosomal_bL34"/>
</dbReference>
<dbReference type="InterPro" id="IPR020939">
    <property type="entry name" value="Ribosomal_bL34_CS"/>
</dbReference>
<dbReference type="NCBIfam" id="TIGR01030">
    <property type="entry name" value="rpmH_bact"/>
    <property type="match status" value="1"/>
</dbReference>
<dbReference type="PANTHER" id="PTHR14503:SF4">
    <property type="entry name" value="LARGE RIBOSOMAL SUBUNIT PROTEIN BL34M"/>
    <property type="match status" value="1"/>
</dbReference>
<dbReference type="PANTHER" id="PTHR14503">
    <property type="entry name" value="MITOCHONDRIAL RIBOSOMAL PROTEIN 34 FAMILY MEMBER"/>
    <property type="match status" value="1"/>
</dbReference>
<dbReference type="Pfam" id="PF00468">
    <property type="entry name" value="Ribosomal_L34"/>
    <property type="match status" value="1"/>
</dbReference>
<dbReference type="PROSITE" id="PS00784">
    <property type="entry name" value="RIBOSOMAL_L34"/>
    <property type="match status" value="1"/>
</dbReference>
<proteinExistence type="inferred from homology"/>
<organism>
    <name type="scientific">Bordetella parapertussis (strain 12822 / ATCC BAA-587 / NCTC 13253)</name>
    <dbReference type="NCBI Taxonomy" id="257311"/>
    <lineage>
        <taxon>Bacteria</taxon>
        <taxon>Pseudomonadati</taxon>
        <taxon>Pseudomonadota</taxon>
        <taxon>Betaproteobacteria</taxon>
        <taxon>Burkholderiales</taxon>
        <taxon>Alcaligenaceae</taxon>
        <taxon>Bordetella</taxon>
    </lineage>
</organism>
<evidence type="ECO:0000255" key="1">
    <source>
        <dbReference type="HAMAP-Rule" id="MF_00391"/>
    </source>
</evidence>
<evidence type="ECO:0000305" key="2"/>
<name>RL34_BORPA</name>
<comment type="similarity">
    <text evidence="1">Belongs to the bacterial ribosomal protein bL34 family.</text>
</comment>
<protein>
    <recommendedName>
        <fullName evidence="1">Large ribosomal subunit protein bL34</fullName>
    </recommendedName>
    <alternativeName>
        <fullName evidence="2">50S ribosomal protein L34</fullName>
    </alternativeName>
</protein>
<feature type="chain" id="PRO_0000187349" description="Large ribosomal subunit protein bL34">
    <location>
        <begin position="1"/>
        <end position="44"/>
    </location>
</feature>
<keyword id="KW-0687">Ribonucleoprotein</keyword>
<keyword id="KW-0689">Ribosomal protein</keyword>
<sequence length="44" mass="5237">MKRTYQPSVTRRKRTHGFRVRMKTRAGRAILNARRAKGRKRLAV</sequence>
<reference key="1">
    <citation type="journal article" date="2003" name="Nat. Genet.">
        <title>Comparative analysis of the genome sequences of Bordetella pertussis, Bordetella parapertussis and Bordetella bronchiseptica.</title>
        <authorList>
            <person name="Parkhill J."/>
            <person name="Sebaihia M."/>
            <person name="Preston A."/>
            <person name="Murphy L.D."/>
            <person name="Thomson N.R."/>
            <person name="Harris D.E."/>
            <person name="Holden M.T.G."/>
            <person name="Churcher C.M."/>
            <person name="Bentley S.D."/>
            <person name="Mungall K.L."/>
            <person name="Cerdeno-Tarraga A.-M."/>
            <person name="Temple L."/>
            <person name="James K.D."/>
            <person name="Harris B."/>
            <person name="Quail M.A."/>
            <person name="Achtman M."/>
            <person name="Atkin R."/>
            <person name="Baker S."/>
            <person name="Basham D."/>
            <person name="Bason N."/>
            <person name="Cherevach I."/>
            <person name="Chillingworth T."/>
            <person name="Collins M."/>
            <person name="Cronin A."/>
            <person name="Davis P."/>
            <person name="Doggett J."/>
            <person name="Feltwell T."/>
            <person name="Goble A."/>
            <person name="Hamlin N."/>
            <person name="Hauser H."/>
            <person name="Holroyd S."/>
            <person name="Jagels K."/>
            <person name="Leather S."/>
            <person name="Moule S."/>
            <person name="Norberczak H."/>
            <person name="O'Neil S."/>
            <person name="Ormond D."/>
            <person name="Price C."/>
            <person name="Rabbinowitsch E."/>
            <person name="Rutter S."/>
            <person name="Sanders M."/>
            <person name="Saunders D."/>
            <person name="Seeger K."/>
            <person name="Sharp S."/>
            <person name="Simmonds M."/>
            <person name="Skelton J."/>
            <person name="Squares R."/>
            <person name="Squares S."/>
            <person name="Stevens K."/>
            <person name="Unwin L."/>
            <person name="Whitehead S."/>
            <person name="Barrell B.G."/>
            <person name="Maskell D.J."/>
        </authorList>
    </citation>
    <scope>NUCLEOTIDE SEQUENCE [LARGE SCALE GENOMIC DNA]</scope>
    <source>
        <strain>12822 / ATCC BAA-587 / NCTC 13253</strain>
    </source>
</reference>